<proteinExistence type="inferred from homology"/>
<gene>
    <name type="ordered locus">SAB1488c</name>
</gene>
<name>Y1488_STAAB</name>
<dbReference type="EMBL" id="AJ938182">
    <property type="protein sequence ID" value="CAI81177.1"/>
    <property type="molecule type" value="Genomic_DNA"/>
</dbReference>
<dbReference type="RefSeq" id="WP_000426912.1">
    <property type="nucleotide sequence ID" value="NC_007622.1"/>
</dbReference>
<dbReference type="SMR" id="Q2YT61"/>
<dbReference type="KEGG" id="sab:SAB1488c"/>
<dbReference type="HOGENOM" id="CLU_162466_0_0_9"/>
<dbReference type="HAMAP" id="MF_01507">
    <property type="entry name" value="UPF0297"/>
    <property type="match status" value="1"/>
</dbReference>
<dbReference type="InterPro" id="IPR009309">
    <property type="entry name" value="IreB"/>
</dbReference>
<dbReference type="NCBIfam" id="NF003997">
    <property type="entry name" value="PRK05473.1"/>
    <property type="match status" value="1"/>
</dbReference>
<dbReference type="PANTHER" id="PTHR40067">
    <property type="entry name" value="UPF0297 PROTEIN YRZL"/>
    <property type="match status" value="1"/>
</dbReference>
<dbReference type="PANTHER" id="PTHR40067:SF1">
    <property type="entry name" value="UPF0297 PROTEIN YRZL"/>
    <property type="match status" value="1"/>
</dbReference>
<dbReference type="Pfam" id="PF06135">
    <property type="entry name" value="IreB"/>
    <property type="match status" value="1"/>
</dbReference>
<dbReference type="PIRSF" id="PIRSF037258">
    <property type="entry name" value="DUF965_bac"/>
    <property type="match status" value="1"/>
</dbReference>
<organism>
    <name type="scientific">Staphylococcus aureus (strain bovine RF122 / ET3-1)</name>
    <dbReference type="NCBI Taxonomy" id="273036"/>
    <lineage>
        <taxon>Bacteria</taxon>
        <taxon>Bacillati</taxon>
        <taxon>Bacillota</taxon>
        <taxon>Bacilli</taxon>
        <taxon>Bacillales</taxon>
        <taxon>Staphylococcaceae</taxon>
        <taxon>Staphylococcus</taxon>
    </lineage>
</organism>
<reference key="1">
    <citation type="journal article" date="2007" name="PLoS ONE">
        <title>Molecular correlates of host specialization in Staphylococcus aureus.</title>
        <authorList>
            <person name="Herron-Olson L."/>
            <person name="Fitzgerald J.R."/>
            <person name="Musser J.M."/>
            <person name="Kapur V."/>
        </authorList>
    </citation>
    <scope>NUCLEOTIDE SEQUENCE [LARGE SCALE GENOMIC DNA]</scope>
    <source>
        <strain>bovine RF122 / ET3-1</strain>
    </source>
</reference>
<evidence type="ECO:0000255" key="1">
    <source>
        <dbReference type="HAMAP-Rule" id="MF_01507"/>
    </source>
</evidence>
<comment type="similarity">
    <text evidence="1">Belongs to the UPF0297 family.</text>
</comment>
<protein>
    <recommendedName>
        <fullName evidence="1">UPF0297 protein SAB1488c</fullName>
    </recommendedName>
</protein>
<feature type="chain" id="PRO_0000236643" description="UPF0297 protein SAB1488c">
    <location>
        <begin position="1"/>
        <end position="86"/>
    </location>
</feature>
<sequence>MENFDKTMKFDYEELPTQDVRDVLNNVYRTLDERGYNAVNQIVGYLLSGDPAYIPRQNEARNQIRHIDRDVIMEELVSYYLKEQNK</sequence>
<accession>Q2YT61</accession>